<sequence length="124" mass="14199">MRHRKSGKQLNRNSSHRQAMFANMMVSLFHHERIVTTLPKAKELRRFAEPMITLAKEATVAKRRLAFSRLRDRQAVVKLFDDLGPHYLARPGGYLRIVKYGFRAGDNAPLAIVELVDRQTAAAE</sequence>
<feature type="chain" id="PRO_1000144364" description="Large ribosomal subunit protein bL17">
    <location>
        <begin position="1"/>
        <end position="124"/>
    </location>
</feature>
<comment type="subunit">
    <text evidence="1">Part of the 50S ribosomal subunit. Contacts protein L32.</text>
</comment>
<comment type="similarity">
    <text evidence="1">Belongs to the bacterial ribosomal protein bL17 family.</text>
</comment>
<proteinExistence type="inferred from homology"/>
<organism>
    <name type="scientific">Acidithiobacillus ferrooxidans (strain ATCC 53993 / BNL-5-31)</name>
    <name type="common">Leptospirillum ferrooxidans (ATCC 53993)</name>
    <dbReference type="NCBI Taxonomy" id="380394"/>
    <lineage>
        <taxon>Bacteria</taxon>
        <taxon>Pseudomonadati</taxon>
        <taxon>Pseudomonadota</taxon>
        <taxon>Acidithiobacillia</taxon>
        <taxon>Acidithiobacillales</taxon>
        <taxon>Acidithiobacillaceae</taxon>
        <taxon>Acidithiobacillus</taxon>
    </lineage>
</organism>
<reference key="1">
    <citation type="submission" date="2008-08" db="EMBL/GenBank/DDBJ databases">
        <title>Complete sequence of Acidithiobacillus ferrooxidans ATCC 53993.</title>
        <authorList>
            <person name="Lucas S."/>
            <person name="Copeland A."/>
            <person name="Lapidus A."/>
            <person name="Glavina del Rio T."/>
            <person name="Dalin E."/>
            <person name="Tice H."/>
            <person name="Bruce D."/>
            <person name="Goodwin L."/>
            <person name="Pitluck S."/>
            <person name="Sims D."/>
            <person name="Brettin T."/>
            <person name="Detter J.C."/>
            <person name="Han C."/>
            <person name="Kuske C.R."/>
            <person name="Larimer F."/>
            <person name="Land M."/>
            <person name="Hauser L."/>
            <person name="Kyrpides N."/>
            <person name="Lykidis A."/>
            <person name="Borole A.P."/>
        </authorList>
    </citation>
    <scope>NUCLEOTIDE SEQUENCE [LARGE SCALE GENOMIC DNA]</scope>
    <source>
        <strain>ATCC 53993 / BNL-5-31</strain>
    </source>
</reference>
<dbReference type="EMBL" id="CP001132">
    <property type="protein sequence ID" value="ACH82779.1"/>
    <property type="molecule type" value="Genomic_DNA"/>
</dbReference>
<dbReference type="RefSeq" id="WP_012536100.1">
    <property type="nucleotide sequence ID" value="NC_011206.1"/>
</dbReference>
<dbReference type="SMR" id="B5EMA0"/>
<dbReference type="GeneID" id="65279732"/>
<dbReference type="KEGG" id="afe:Lferr_0525"/>
<dbReference type="eggNOG" id="COG0203">
    <property type="taxonomic scope" value="Bacteria"/>
</dbReference>
<dbReference type="HOGENOM" id="CLU_074407_2_0_6"/>
<dbReference type="GO" id="GO:0022625">
    <property type="term" value="C:cytosolic large ribosomal subunit"/>
    <property type="evidence" value="ECO:0007669"/>
    <property type="project" value="TreeGrafter"/>
</dbReference>
<dbReference type="GO" id="GO:0003735">
    <property type="term" value="F:structural constituent of ribosome"/>
    <property type="evidence" value="ECO:0007669"/>
    <property type="project" value="InterPro"/>
</dbReference>
<dbReference type="GO" id="GO:0006412">
    <property type="term" value="P:translation"/>
    <property type="evidence" value="ECO:0007669"/>
    <property type="project" value="UniProtKB-UniRule"/>
</dbReference>
<dbReference type="FunFam" id="3.90.1030.10:FF:000001">
    <property type="entry name" value="50S ribosomal protein L17"/>
    <property type="match status" value="1"/>
</dbReference>
<dbReference type="Gene3D" id="3.90.1030.10">
    <property type="entry name" value="Ribosomal protein L17"/>
    <property type="match status" value="1"/>
</dbReference>
<dbReference type="HAMAP" id="MF_01368">
    <property type="entry name" value="Ribosomal_bL17"/>
    <property type="match status" value="1"/>
</dbReference>
<dbReference type="InterPro" id="IPR000456">
    <property type="entry name" value="Ribosomal_bL17"/>
</dbReference>
<dbReference type="InterPro" id="IPR047859">
    <property type="entry name" value="Ribosomal_bL17_CS"/>
</dbReference>
<dbReference type="InterPro" id="IPR036373">
    <property type="entry name" value="Ribosomal_bL17_sf"/>
</dbReference>
<dbReference type="NCBIfam" id="TIGR00059">
    <property type="entry name" value="L17"/>
    <property type="match status" value="1"/>
</dbReference>
<dbReference type="PANTHER" id="PTHR14413:SF16">
    <property type="entry name" value="LARGE RIBOSOMAL SUBUNIT PROTEIN BL17M"/>
    <property type="match status" value="1"/>
</dbReference>
<dbReference type="PANTHER" id="PTHR14413">
    <property type="entry name" value="RIBOSOMAL PROTEIN L17"/>
    <property type="match status" value="1"/>
</dbReference>
<dbReference type="Pfam" id="PF01196">
    <property type="entry name" value="Ribosomal_L17"/>
    <property type="match status" value="1"/>
</dbReference>
<dbReference type="SUPFAM" id="SSF64263">
    <property type="entry name" value="Prokaryotic ribosomal protein L17"/>
    <property type="match status" value="1"/>
</dbReference>
<dbReference type="PROSITE" id="PS01167">
    <property type="entry name" value="RIBOSOMAL_L17"/>
    <property type="match status" value="1"/>
</dbReference>
<keyword id="KW-0687">Ribonucleoprotein</keyword>
<keyword id="KW-0689">Ribosomal protein</keyword>
<evidence type="ECO:0000255" key="1">
    <source>
        <dbReference type="HAMAP-Rule" id="MF_01368"/>
    </source>
</evidence>
<evidence type="ECO:0000305" key="2"/>
<name>RL17_ACIF5</name>
<accession>B5EMA0</accession>
<gene>
    <name evidence="1" type="primary">rplQ</name>
    <name type="ordered locus">Lferr_0525</name>
</gene>
<protein>
    <recommendedName>
        <fullName evidence="1">Large ribosomal subunit protein bL17</fullName>
    </recommendedName>
    <alternativeName>
        <fullName evidence="2">50S ribosomal protein L17</fullName>
    </alternativeName>
</protein>